<gene>
    <name type="primary">CABP</name>
</gene>
<protein>
    <recommendedName>
        <fullName>Putative flagellar calcium-binding protein</fullName>
    </recommendedName>
</protein>
<organism>
    <name type="scientific">Crithidia fasciculata</name>
    <dbReference type="NCBI Taxonomy" id="5656"/>
    <lineage>
        <taxon>Eukaryota</taxon>
        <taxon>Discoba</taxon>
        <taxon>Euglenozoa</taxon>
        <taxon>Kinetoplastea</taxon>
        <taxon>Metakinetoplastina</taxon>
        <taxon>Trypanosomatida</taxon>
        <taxon>Trypanosomatidae</taxon>
        <taxon>Leishmaniinae</taxon>
        <taxon>Crithidia</taxon>
    </lineage>
</organism>
<reference key="1">
    <citation type="journal article" date="1996" name="Mol. Cell. Biol.">
        <title>Sequences within the 5' untranslated region regulate the levels of a kinetoplast DNA topoisomerase mRNA during the cell cycle.</title>
        <authorList>
            <person name="Pasion S.G."/>
            <person name="Hines J.C."/>
            <person name="Ou X."/>
            <person name="Mahmood R."/>
            <person name="Ray D.S."/>
        </authorList>
    </citation>
    <scope>NUCLEOTIDE SEQUENCE [MRNA]</scope>
    <source>
        <strain>CFC1</strain>
    </source>
</reference>
<comment type="subcellular location">
    <subcellularLocation>
        <location evidence="3">Cell projection</location>
        <location evidence="3">Cilium</location>
        <location evidence="3">Flagellum</location>
    </subcellularLocation>
</comment>
<comment type="similarity">
    <text evidence="3">Belongs to the calflagin family.</text>
</comment>
<name>FCA1_CRIFA</name>
<sequence length="63" mass="7108">MGCISSKSTQTGKKEGKTAAERKAAWEGIRHGLPRRKTAEDKARRIELFKKFDKNNTGKLSME</sequence>
<keyword id="KW-0106">Calcium</keyword>
<keyword id="KW-0966">Cell projection</keyword>
<keyword id="KW-0969">Cilium</keyword>
<keyword id="KW-0282">Flagellum</keyword>
<keyword id="KW-0479">Metal-binding</keyword>
<keyword id="KW-0677">Repeat</keyword>
<dbReference type="EMBL" id="U21305">
    <property type="protein sequence ID" value="AAC47410.1"/>
    <property type="molecule type" value="mRNA"/>
</dbReference>
<dbReference type="SMR" id="Q23688"/>
<dbReference type="VEuPathDB" id="TriTrypDB:CFAC1_120017200"/>
<dbReference type="GO" id="GO:0031514">
    <property type="term" value="C:motile cilium"/>
    <property type="evidence" value="ECO:0007669"/>
    <property type="project" value="UniProtKB-SubCell"/>
</dbReference>
<dbReference type="GO" id="GO:0005509">
    <property type="term" value="F:calcium ion binding"/>
    <property type="evidence" value="ECO:0007669"/>
    <property type="project" value="InterPro"/>
</dbReference>
<dbReference type="Gene3D" id="1.10.238.10">
    <property type="entry name" value="EF-hand"/>
    <property type="match status" value="1"/>
</dbReference>
<dbReference type="InterPro" id="IPR002048">
    <property type="entry name" value="EF_hand_dom"/>
</dbReference>
<dbReference type="InterPro" id="IPR054322">
    <property type="entry name" value="FCABP_EF-hand"/>
</dbReference>
<dbReference type="Pfam" id="PF22592">
    <property type="entry name" value="FCaBP_EF-hand"/>
    <property type="match status" value="1"/>
</dbReference>
<dbReference type="PROSITE" id="PS50222">
    <property type="entry name" value="EF_HAND_2"/>
    <property type="match status" value="1"/>
</dbReference>
<feature type="chain" id="PRO_0000073741" description="Putative flagellar calcium-binding protein">
    <location>
        <begin position="1"/>
        <end position="63" status="greater than"/>
    </location>
</feature>
<feature type="domain" description="EF-hand" evidence="1">
    <location>
        <begin position="40"/>
        <end position="63" status="greater than"/>
    </location>
</feature>
<feature type="region of interest" description="Disordered" evidence="2">
    <location>
        <begin position="1"/>
        <end position="23"/>
    </location>
</feature>
<feature type="compositionally biased region" description="Polar residues" evidence="2">
    <location>
        <begin position="1"/>
        <end position="11"/>
    </location>
</feature>
<feature type="compositionally biased region" description="Basic and acidic residues" evidence="2">
    <location>
        <begin position="12"/>
        <end position="23"/>
    </location>
</feature>
<feature type="binding site" evidence="3">
    <location>
        <position position="53"/>
    </location>
    <ligand>
        <name>Ca(2+)</name>
        <dbReference type="ChEBI" id="CHEBI:29108"/>
    </ligand>
</feature>
<feature type="binding site" evidence="3">
    <location>
        <position position="55"/>
    </location>
    <ligand>
        <name>Ca(2+)</name>
        <dbReference type="ChEBI" id="CHEBI:29108"/>
    </ligand>
</feature>
<feature type="binding site" evidence="3">
    <location>
        <position position="57"/>
    </location>
    <ligand>
        <name>Ca(2+)</name>
        <dbReference type="ChEBI" id="CHEBI:29108"/>
    </ligand>
</feature>
<feature type="binding site" evidence="3">
    <location>
        <position position="59"/>
    </location>
    <ligand>
        <name>Ca(2+)</name>
        <dbReference type="ChEBI" id="CHEBI:29108"/>
    </ligand>
</feature>
<feature type="non-terminal residue">
    <location>
        <position position="63"/>
    </location>
</feature>
<proteinExistence type="evidence at transcript level"/>
<evidence type="ECO:0000255" key="1">
    <source>
        <dbReference type="PROSITE-ProRule" id="PRU00448"/>
    </source>
</evidence>
<evidence type="ECO:0000256" key="2">
    <source>
        <dbReference type="SAM" id="MobiDB-lite"/>
    </source>
</evidence>
<evidence type="ECO:0000305" key="3"/>
<accession>Q23688</accession>